<feature type="chain" id="PRO_1000019826" description="Serine--tRNA ligase">
    <location>
        <begin position="1"/>
        <end position="424"/>
    </location>
</feature>
<feature type="binding site" evidence="1">
    <location>
        <begin position="230"/>
        <end position="232"/>
    </location>
    <ligand>
        <name>L-serine</name>
        <dbReference type="ChEBI" id="CHEBI:33384"/>
    </ligand>
</feature>
<feature type="binding site" evidence="1">
    <location>
        <begin position="261"/>
        <end position="263"/>
    </location>
    <ligand>
        <name>ATP</name>
        <dbReference type="ChEBI" id="CHEBI:30616"/>
    </ligand>
</feature>
<feature type="binding site" evidence="1">
    <location>
        <position position="284"/>
    </location>
    <ligand>
        <name>L-serine</name>
        <dbReference type="ChEBI" id="CHEBI:33384"/>
    </ligand>
</feature>
<feature type="binding site" evidence="1">
    <location>
        <begin position="348"/>
        <end position="351"/>
    </location>
    <ligand>
        <name>ATP</name>
        <dbReference type="ChEBI" id="CHEBI:30616"/>
    </ligand>
</feature>
<feature type="binding site" evidence="1">
    <location>
        <position position="382"/>
    </location>
    <ligand>
        <name>L-serine</name>
        <dbReference type="ChEBI" id="CHEBI:33384"/>
    </ligand>
</feature>
<gene>
    <name evidence="1" type="primary">serS</name>
    <name type="ordered locus">Acid_2483</name>
</gene>
<proteinExistence type="inferred from homology"/>
<keyword id="KW-0030">Aminoacyl-tRNA synthetase</keyword>
<keyword id="KW-0067">ATP-binding</keyword>
<keyword id="KW-0963">Cytoplasm</keyword>
<keyword id="KW-0436">Ligase</keyword>
<keyword id="KW-0547">Nucleotide-binding</keyword>
<keyword id="KW-0648">Protein biosynthesis</keyword>
<sequence length="424" mass="47893">MHDLSHFRNNFEKLAERLATRGGAINLDGFRDLDLKRRSAISQAEQLKARKNQESLEIGKLKREGADTAERQKEVRAIADQIVALDEQVKTVDEEFQKLLSGIPNIPHESVPVGKSADDNVEVRRSGEPAKFDFEPKAHWDLGPELGILDFERAVKITGARFALYWGAGARLERALVNFFLDVHTQQHGYTEVLPPFMVNSASLYGTGQLPKFAEDLFKIENSDFWLIPTAEVPVTNIYRDETLEGEQLPVKLCAYTPCFRSEAGSYGRDVRGIIRQHQFQKVELVKFTRPEQSYDELDKLTADAEDILVRLGLPFRTVVLCTGDMGPSSAKTYDIEVWLPGQNNYKEISSCSNFEAFQARRAGIRYRTGKKSEFAHTINGSGLAVGRTWVAIIENYQQMDGSVIIPEALRPYMNAEIIRPERP</sequence>
<dbReference type="EC" id="6.1.1.11" evidence="1"/>
<dbReference type="EMBL" id="CP000473">
    <property type="protein sequence ID" value="ABJ83472.1"/>
    <property type="molecule type" value="Genomic_DNA"/>
</dbReference>
<dbReference type="SMR" id="Q024V4"/>
<dbReference type="FunCoup" id="Q024V4">
    <property type="interactions" value="602"/>
</dbReference>
<dbReference type="STRING" id="234267.Acid_2483"/>
<dbReference type="KEGG" id="sus:Acid_2483"/>
<dbReference type="eggNOG" id="COG0172">
    <property type="taxonomic scope" value="Bacteria"/>
</dbReference>
<dbReference type="HOGENOM" id="CLU_023797_1_1_0"/>
<dbReference type="InParanoid" id="Q024V4"/>
<dbReference type="OrthoDB" id="9804647at2"/>
<dbReference type="UniPathway" id="UPA00906">
    <property type="reaction ID" value="UER00895"/>
</dbReference>
<dbReference type="GO" id="GO:0005737">
    <property type="term" value="C:cytoplasm"/>
    <property type="evidence" value="ECO:0007669"/>
    <property type="project" value="UniProtKB-SubCell"/>
</dbReference>
<dbReference type="GO" id="GO:0005524">
    <property type="term" value="F:ATP binding"/>
    <property type="evidence" value="ECO:0007669"/>
    <property type="project" value="UniProtKB-UniRule"/>
</dbReference>
<dbReference type="GO" id="GO:0004828">
    <property type="term" value="F:serine-tRNA ligase activity"/>
    <property type="evidence" value="ECO:0007669"/>
    <property type="project" value="UniProtKB-UniRule"/>
</dbReference>
<dbReference type="GO" id="GO:0016260">
    <property type="term" value="P:selenocysteine biosynthetic process"/>
    <property type="evidence" value="ECO:0007669"/>
    <property type="project" value="UniProtKB-UniRule"/>
</dbReference>
<dbReference type="GO" id="GO:0006434">
    <property type="term" value="P:seryl-tRNA aminoacylation"/>
    <property type="evidence" value="ECO:0007669"/>
    <property type="project" value="UniProtKB-UniRule"/>
</dbReference>
<dbReference type="CDD" id="cd00770">
    <property type="entry name" value="SerRS_core"/>
    <property type="match status" value="1"/>
</dbReference>
<dbReference type="Gene3D" id="3.30.930.10">
    <property type="entry name" value="Bira Bifunctional Protein, Domain 2"/>
    <property type="match status" value="1"/>
</dbReference>
<dbReference type="Gene3D" id="1.10.287.40">
    <property type="entry name" value="Serine-tRNA synthetase, tRNA binding domain"/>
    <property type="match status" value="1"/>
</dbReference>
<dbReference type="HAMAP" id="MF_00176">
    <property type="entry name" value="Ser_tRNA_synth_type1"/>
    <property type="match status" value="1"/>
</dbReference>
<dbReference type="InterPro" id="IPR002314">
    <property type="entry name" value="aa-tRNA-synt_IIb"/>
</dbReference>
<dbReference type="InterPro" id="IPR006195">
    <property type="entry name" value="aa-tRNA-synth_II"/>
</dbReference>
<dbReference type="InterPro" id="IPR045864">
    <property type="entry name" value="aa-tRNA-synth_II/BPL/LPL"/>
</dbReference>
<dbReference type="InterPro" id="IPR002317">
    <property type="entry name" value="Ser-tRNA-ligase_type_1"/>
</dbReference>
<dbReference type="InterPro" id="IPR015866">
    <property type="entry name" value="Ser-tRNA-synth_1_N"/>
</dbReference>
<dbReference type="InterPro" id="IPR042103">
    <property type="entry name" value="SerRS_1_N_sf"/>
</dbReference>
<dbReference type="InterPro" id="IPR033729">
    <property type="entry name" value="SerRS_core"/>
</dbReference>
<dbReference type="InterPro" id="IPR010978">
    <property type="entry name" value="tRNA-bd_arm"/>
</dbReference>
<dbReference type="NCBIfam" id="TIGR00414">
    <property type="entry name" value="serS"/>
    <property type="match status" value="1"/>
</dbReference>
<dbReference type="PANTHER" id="PTHR43697:SF1">
    <property type="entry name" value="SERINE--TRNA LIGASE"/>
    <property type="match status" value="1"/>
</dbReference>
<dbReference type="PANTHER" id="PTHR43697">
    <property type="entry name" value="SERYL-TRNA SYNTHETASE"/>
    <property type="match status" value="1"/>
</dbReference>
<dbReference type="Pfam" id="PF02403">
    <property type="entry name" value="Seryl_tRNA_N"/>
    <property type="match status" value="1"/>
</dbReference>
<dbReference type="Pfam" id="PF00587">
    <property type="entry name" value="tRNA-synt_2b"/>
    <property type="match status" value="1"/>
</dbReference>
<dbReference type="PIRSF" id="PIRSF001529">
    <property type="entry name" value="Ser-tRNA-synth_IIa"/>
    <property type="match status" value="1"/>
</dbReference>
<dbReference type="PRINTS" id="PR00981">
    <property type="entry name" value="TRNASYNTHSER"/>
</dbReference>
<dbReference type="SUPFAM" id="SSF55681">
    <property type="entry name" value="Class II aaRS and biotin synthetases"/>
    <property type="match status" value="1"/>
</dbReference>
<dbReference type="SUPFAM" id="SSF46589">
    <property type="entry name" value="tRNA-binding arm"/>
    <property type="match status" value="1"/>
</dbReference>
<dbReference type="PROSITE" id="PS50862">
    <property type="entry name" value="AA_TRNA_LIGASE_II"/>
    <property type="match status" value="1"/>
</dbReference>
<comment type="function">
    <text evidence="1">Catalyzes the attachment of serine to tRNA(Ser). Is also able to aminoacylate tRNA(Sec) with serine, to form the misacylated tRNA L-seryl-tRNA(Sec), which will be further converted into selenocysteinyl-tRNA(Sec).</text>
</comment>
<comment type="catalytic activity">
    <reaction evidence="1">
        <text>tRNA(Ser) + L-serine + ATP = L-seryl-tRNA(Ser) + AMP + diphosphate + H(+)</text>
        <dbReference type="Rhea" id="RHEA:12292"/>
        <dbReference type="Rhea" id="RHEA-COMP:9669"/>
        <dbReference type="Rhea" id="RHEA-COMP:9703"/>
        <dbReference type="ChEBI" id="CHEBI:15378"/>
        <dbReference type="ChEBI" id="CHEBI:30616"/>
        <dbReference type="ChEBI" id="CHEBI:33019"/>
        <dbReference type="ChEBI" id="CHEBI:33384"/>
        <dbReference type="ChEBI" id="CHEBI:78442"/>
        <dbReference type="ChEBI" id="CHEBI:78533"/>
        <dbReference type="ChEBI" id="CHEBI:456215"/>
        <dbReference type="EC" id="6.1.1.11"/>
    </reaction>
</comment>
<comment type="catalytic activity">
    <reaction evidence="1">
        <text>tRNA(Sec) + L-serine + ATP = L-seryl-tRNA(Sec) + AMP + diphosphate + H(+)</text>
        <dbReference type="Rhea" id="RHEA:42580"/>
        <dbReference type="Rhea" id="RHEA-COMP:9742"/>
        <dbReference type="Rhea" id="RHEA-COMP:10128"/>
        <dbReference type="ChEBI" id="CHEBI:15378"/>
        <dbReference type="ChEBI" id="CHEBI:30616"/>
        <dbReference type="ChEBI" id="CHEBI:33019"/>
        <dbReference type="ChEBI" id="CHEBI:33384"/>
        <dbReference type="ChEBI" id="CHEBI:78442"/>
        <dbReference type="ChEBI" id="CHEBI:78533"/>
        <dbReference type="ChEBI" id="CHEBI:456215"/>
        <dbReference type="EC" id="6.1.1.11"/>
    </reaction>
</comment>
<comment type="pathway">
    <text evidence="1">Aminoacyl-tRNA biosynthesis; selenocysteinyl-tRNA(Sec) biosynthesis; L-seryl-tRNA(Sec) from L-serine and tRNA(Sec): step 1/1.</text>
</comment>
<comment type="subunit">
    <text evidence="1">Homodimer. The tRNA molecule binds across the dimer.</text>
</comment>
<comment type="subcellular location">
    <subcellularLocation>
        <location evidence="1">Cytoplasm</location>
    </subcellularLocation>
</comment>
<comment type="domain">
    <text evidence="1">Consists of two distinct domains, a catalytic core and a N-terminal extension that is involved in tRNA binding.</text>
</comment>
<comment type="similarity">
    <text evidence="1">Belongs to the class-II aminoacyl-tRNA synthetase family. Type-1 seryl-tRNA synthetase subfamily.</text>
</comment>
<name>SYS_SOLUE</name>
<organism>
    <name type="scientific">Solibacter usitatus (strain Ellin6076)</name>
    <dbReference type="NCBI Taxonomy" id="234267"/>
    <lineage>
        <taxon>Bacteria</taxon>
        <taxon>Pseudomonadati</taxon>
        <taxon>Acidobacteriota</taxon>
        <taxon>Terriglobia</taxon>
        <taxon>Bryobacterales</taxon>
        <taxon>Solibacteraceae</taxon>
        <taxon>Candidatus Solibacter</taxon>
    </lineage>
</organism>
<protein>
    <recommendedName>
        <fullName evidence="1">Serine--tRNA ligase</fullName>
        <ecNumber evidence="1">6.1.1.11</ecNumber>
    </recommendedName>
    <alternativeName>
        <fullName evidence="1">Seryl-tRNA synthetase</fullName>
        <shortName evidence="1">SerRS</shortName>
    </alternativeName>
    <alternativeName>
        <fullName evidence="1">Seryl-tRNA(Ser/Sec) synthetase</fullName>
    </alternativeName>
</protein>
<reference key="1">
    <citation type="journal article" date="2009" name="Appl. Environ. Microbiol.">
        <title>Three genomes from the phylum Acidobacteria provide insight into the lifestyles of these microorganisms in soils.</title>
        <authorList>
            <person name="Ward N.L."/>
            <person name="Challacombe J.F."/>
            <person name="Janssen P.H."/>
            <person name="Henrissat B."/>
            <person name="Coutinho P.M."/>
            <person name="Wu M."/>
            <person name="Xie G."/>
            <person name="Haft D.H."/>
            <person name="Sait M."/>
            <person name="Badger J."/>
            <person name="Barabote R.D."/>
            <person name="Bradley B."/>
            <person name="Brettin T.S."/>
            <person name="Brinkac L.M."/>
            <person name="Bruce D."/>
            <person name="Creasy T."/>
            <person name="Daugherty S.C."/>
            <person name="Davidsen T.M."/>
            <person name="DeBoy R.T."/>
            <person name="Detter J.C."/>
            <person name="Dodson R.J."/>
            <person name="Durkin A.S."/>
            <person name="Ganapathy A."/>
            <person name="Gwinn-Giglio M."/>
            <person name="Han C.S."/>
            <person name="Khouri H."/>
            <person name="Kiss H."/>
            <person name="Kothari S.P."/>
            <person name="Madupu R."/>
            <person name="Nelson K.E."/>
            <person name="Nelson W.C."/>
            <person name="Paulsen I."/>
            <person name="Penn K."/>
            <person name="Ren Q."/>
            <person name="Rosovitz M.J."/>
            <person name="Selengut J.D."/>
            <person name="Shrivastava S."/>
            <person name="Sullivan S.A."/>
            <person name="Tapia R."/>
            <person name="Thompson L.S."/>
            <person name="Watkins K.L."/>
            <person name="Yang Q."/>
            <person name="Yu C."/>
            <person name="Zafar N."/>
            <person name="Zhou L."/>
            <person name="Kuske C.R."/>
        </authorList>
    </citation>
    <scope>NUCLEOTIDE SEQUENCE [LARGE SCALE GENOMIC DNA]</scope>
    <source>
        <strain>Ellin6076</strain>
    </source>
</reference>
<accession>Q024V4</accession>
<evidence type="ECO:0000255" key="1">
    <source>
        <dbReference type="HAMAP-Rule" id="MF_00176"/>
    </source>
</evidence>